<feature type="chain" id="PRO_0000290876" description="Small ribosomal subunit protein uS8">
    <location>
        <begin position="1"/>
        <end position="131"/>
    </location>
</feature>
<name>RS8_METFK</name>
<dbReference type="EMBL" id="CP000284">
    <property type="protein sequence ID" value="ABE48564.1"/>
    <property type="molecule type" value="Genomic_DNA"/>
</dbReference>
<dbReference type="RefSeq" id="WP_011478661.1">
    <property type="nucleotide sequence ID" value="NC_007947.1"/>
</dbReference>
<dbReference type="SMR" id="Q1H4M3"/>
<dbReference type="STRING" id="265072.Mfla_0293"/>
<dbReference type="KEGG" id="mfa:Mfla_0293"/>
<dbReference type="eggNOG" id="COG0096">
    <property type="taxonomic scope" value="Bacteria"/>
</dbReference>
<dbReference type="HOGENOM" id="CLU_098428_0_0_4"/>
<dbReference type="OrthoDB" id="9802617at2"/>
<dbReference type="Proteomes" id="UP000002440">
    <property type="component" value="Chromosome"/>
</dbReference>
<dbReference type="GO" id="GO:1990904">
    <property type="term" value="C:ribonucleoprotein complex"/>
    <property type="evidence" value="ECO:0007669"/>
    <property type="project" value="UniProtKB-KW"/>
</dbReference>
<dbReference type="GO" id="GO:0005840">
    <property type="term" value="C:ribosome"/>
    <property type="evidence" value="ECO:0007669"/>
    <property type="project" value="UniProtKB-KW"/>
</dbReference>
<dbReference type="GO" id="GO:0019843">
    <property type="term" value="F:rRNA binding"/>
    <property type="evidence" value="ECO:0007669"/>
    <property type="project" value="UniProtKB-UniRule"/>
</dbReference>
<dbReference type="GO" id="GO:0003735">
    <property type="term" value="F:structural constituent of ribosome"/>
    <property type="evidence" value="ECO:0007669"/>
    <property type="project" value="InterPro"/>
</dbReference>
<dbReference type="GO" id="GO:0006412">
    <property type="term" value="P:translation"/>
    <property type="evidence" value="ECO:0007669"/>
    <property type="project" value="UniProtKB-UniRule"/>
</dbReference>
<dbReference type="FunFam" id="3.30.1370.30:FF:000002">
    <property type="entry name" value="30S ribosomal protein S8"/>
    <property type="match status" value="1"/>
</dbReference>
<dbReference type="FunFam" id="3.30.1490.10:FF:000001">
    <property type="entry name" value="30S ribosomal protein S8"/>
    <property type="match status" value="1"/>
</dbReference>
<dbReference type="Gene3D" id="3.30.1370.30">
    <property type="match status" value="1"/>
</dbReference>
<dbReference type="Gene3D" id="3.30.1490.10">
    <property type="match status" value="1"/>
</dbReference>
<dbReference type="HAMAP" id="MF_01302_B">
    <property type="entry name" value="Ribosomal_uS8_B"/>
    <property type="match status" value="1"/>
</dbReference>
<dbReference type="InterPro" id="IPR000630">
    <property type="entry name" value="Ribosomal_uS8"/>
</dbReference>
<dbReference type="InterPro" id="IPR047863">
    <property type="entry name" value="Ribosomal_uS8_CS"/>
</dbReference>
<dbReference type="InterPro" id="IPR035987">
    <property type="entry name" value="Ribosomal_uS8_sf"/>
</dbReference>
<dbReference type="NCBIfam" id="NF001109">
    <property type="entry name" value="PRK00136.1"/>
    <property type="match status" value="1"/>
</dbReference>
<dbReference type="PANTHER" id="PTHR11758">
    <property type="entry name" value="40S RIBOSOMAL PROTEIN S15A"/>
    <property type="match status" value="1"/>
</dbReference>
<dbReference type="Pfam" id="PF00410">
    <property type="entry name" value="Ribosomal_S8"/>
    <property type="match status" value="1"/>
</dbReference>
<dbReference type="SUPFAM" id="SSF56047">
    <property type="entry name" value="Ribosomal protein S8"/>
    <property type="match status" value="1"/>
</dbReference>
<dbReference type="PROSITE" id="PS00053">
    <property type="entry name" value="RIBOSOMAL_S8"/>
    <property type="match status" value="1"/>
</dbReference>
<sequence length="131" mass="14235">MSMSDPIADMLTRIRNAQSTNKVSVSMPSSKLKRAIAAVLKDEGYIDDFSVQDVDGKPQLNISLKYYAGRPVIEKIERVSRPGLRIYRGNQEIPVVMHGLGVTIVSTSKGVMTDRKARDAGVGGEVLCVVA</sequence>
<organism>
    <name type="scientific">Methylobacillus flagellatus (strain ATCC 51484 / DSM 6875 / VKM B-1610 / KT)</name>
    <dbReference type="NCBI Taxonomy" id="265072"/>
    <lineage>
        <taxon>Bacteria</taxon>
        <taxon>Pseudomonadati</taxon>
        <taxon>Pseudomonadota</taxon>
        <taxon>Betaproteobacteria</taxon>
        <taxon>Nitrosomonadales</taxon>
        <taxon>Methylophilaceae</taxon>
        <taxon>Methylobacillus</taxon>
    </lineage>
</organism>
<keyword id="KW-1185">Reference proteome</keyword>
<keyword id="KW-0687">Ribonucleoprotein</keyword>
<keyword id="KW-0689">Ribosomal protein</keyword>
<keyword id="KW-0694">RNA-binding</keyword>
<keyword id="KW-0699">rRNA-binding</keyword>
<proteinExistence type="inferred from homology"/>
<protein>
    <recommendedName>
        <fullName evidence="1">Small ribosomal subunit protein uS8</fullName>
    </recommendedName>
    <alternativeName>
        <fullName evidence="2">30S ribosomal protein S8</fullName>
    </alternativeName>
</protein>
<evidence type="ECO:0000255" key="1">
    <source>
        <dbReference type="HAMAP-Rule" id="MF_01302"/>
    </source>
</evidence>
<evidence type="ECO:0000305" key="2"/>
<gene>
    <name evidence="1" type="primary">rpsH</name>
    <name type="ordered locus">Mfla_0293</name>
</gene>
<reference key="1">
    <citation type="submission" date="2006-03" db="EMBL/GenBank/DDBJ databases">
        <title>Complete sequence of Methylobacillus flagellatus KT.</title>
        <authorList>
            <consortium name="US DOE Joint Genome Institute"/>
            <person name="Copeland A."/>
            <person name="Lucas S."/>
            <person name="Lapidus A."/>
            <person name="Barry K."/>
            <person name="Detter J.C."/>
            <person name="Glavina del Rio T."/>
            <person name="Hammon N."/>
            <person name="Israni S."/>
            <person name="Dalin E."/>
            <person name="Tice H."/>
            <person name="Pitluck S."/>
            <person name="Brettin T."/>
            <person name="Bruce D."/>
            <person name="Han C."/>
            <person name="Tapia R."/>
            <person name="Saunders E."/>
            <person name="Gilna P."/>
            <person name="Schmutz J."/>
            <person name="Larimer F."/>
            <person name="Land M."/>
            <person name="Kyrpides N."/>
            <person name="Anderson I."/>
            <person name="Richardson P."/>
        </authorList>
    </citation>
    <scope>NUCLEOTIDE SEQUENCE [LARGE SCALE GENOMIC DNA]</scope>
    <source>
        <strain>ATCC 51484 / DSM 6875 / VKM B-1610 / KT</strain>
    </source>
</reference>
<comment type="function">
    <text evidence="1">One of the primary rRNA binding proteins, it binds directly to 16S rRNA central domain where it helps coordinate assembly of the platform of the 30S subunit.</text>
</comment>
<comment type="subunit">
    <text evidence="1">Part of the 30S ribosomal subunit. Contacts proteins S5 and S12.</text>
</comment>
<comment type="similarity">
    <text evidence="1">Belongs to the universal ribosomal protein uS8 family.</text>
</comment>
<accession>Q1H4M3</accession>